<sequence>MGVAPVSNQPLVAQQPKGIIDPSTGKPIGSNDAFFGEINNELADKGFLVTSTDELINWARTGSLMWMTFGLACCAVEMMQLSMPRYDVERFGFAPRASPRQSDVMIVAGTLTNKMAPALRKVYDQMPEPRYVISMGSCANGGGYYHYSYSVVRGCDRIVPIDIYVPGCPPTAEALLYGVLLLQKKIRRTGTIER</sequence>
<organism>
    <name type="scientific">Rhizobium leguminosarum bv. trifolii (strain WSM2304)</name>
    <dbReference type="NCBI Taxonomy" id="395492"/>
    <lineage>
        <taxon>Bacteria</taxon>
        <taxon>Pseudomonadati</taxon>
        <taxon>Pseudomonadota</taxon>
        <taxon>Alphaproteobacteria</taxon>
        <taxon>Hyphomicrobiales</taxon>
        <taxon>Rhizobiaceae</taxon>
        <taxon>Rhizobium/Agrobacterium group</taxon>
        <taxon>Rhizobium</taxon>
    </lineage>
</organism>
<comment type="function">
    <text evidence="1">NDH-1 shuttles electrons from NADH, via FMN and iron-sulfur (Fe-S) centers, to quinones in the respiratory chain. The immediate electron acceptor for the enzyme in this species is believed to be ubiquinone. Couples the redox reaction to proton translocation (for every two electrons transferred, four hydrogen ions are translocated across the cytoplasmic membrane), and thus conserves the redox energy in a proton gradient.</text>
</comment>
<comment type="catalytic activity">
    <reaction evidence="1">
        <text>a quinone + NADH + 5 H(+)(in) = a quinol + NAD(+) + 4 H(+)(out)</text>
        <dbReference type="Rhea" id="RHEA:57888"/>
        <dbReference type="ChEBI" id="CHEBI:15378"/>
        <dbReference type="ChEBI" id="CHEBI:24646"/>
        <dbReference type="ChEBI" id="CHEBI:57540"/>
        <dbReference type="ChEBI" id="CHEBI:57945"/>
        <dbReference type="ChEBI" id="CHEBI:132124"/>
    </reaction>
</comment>
<comment type="cofactor">
    <cofactor evidence="1">
        <name>[4Fe-4S] cluster</name>
        <dbReference type="ChEBI" id="CHEBI:49883"/>
    </cofactor>
    <text evidence="1">Binds 1 [4Fe-4S] cluster.</text>
</comment>
<comment type="subunit">
    <text evidence="1">NDH-1 is composed of 14 different subunits. Subunits NuoB, C, D, E, F, and G constitute the peripheral sector of the complex.</text>
</comment>
<comment type="subcellular location">
    <subcellularLocation>
        <location evidence="1">Cell inner membrane</location>
        <topology evidence="1">Peripheral membrane protein</topology>
        <orientation evidence="1">Cytoplasmic side</orientation>
    </subcellularLocation>
</comment>
<comment type="similarity">
    <text evidence="1">Belongs to the complex I 20 kDa subunit family.</text>
</comment>
<feature type="chain" id="PRO_0000376329" description="NADH-quinone oxidoreductase subunit B">
    <location>
        <begin position="1"/>
        <end position="194"/>
    </location>
</feature>
<feature type="binding site" evidence="1">
    <location>
        <position position="73"/>
    </location>
    <ligand>
        <name>[4Fe-4S] cluster</name>
        <dbReference type="ChEBI" id="CHEBI:49883"/>
    </ligand>
</feature>
<feature type="binding site" evidence="1">
    <location>
        <position position="74"/>
    </location>
    <ligand>
        <name>[4Fe-4S] cluster</name>
        <dbReference type="ChEBI" id="CHEBI:49883"/>
    </ligand>
</feature>
<feature type="binding site" evidence="1">
    <location>
        <position position="138"/>
    </location>
    <ligand>
        <name>[4Fe-4S] cluster</name>
        <dbReference type="ChEBI" id="CHEBI:49883"/>
    </ligand>
</feature>
<feature type="binding site" evidence="1">
    <location>
        <position position="168"/>
    </location>
    <ligand>
        <name>[4Fe-4S] cluster</name>
        <dbReference type="ChEBI" id="CHEBI:49883"/>
    </ligand>
</feature>
<dbReference type="EC" id="7.1.1.-" evidence="1"/>
<dbReference type="EMBL" id="CP001191">
    <property type="protein sequence ID" value="ACI54554.1"/>
    <property type="molecule type" value="Genomic_DNA"/>
</dbReference>
<dbReference type="RefSeq" id="WP_003578567.1">
    <property type="nucleotide sequence ID" value="NC_011369.1"/>
</dbReference>
<dbReference type="SMR" id="B5ZYL3"/>
<dbReference type="STRING" id="395492.Rleg2_1260"/>
<dbReference type="KEGG" id="rlt:Rleg2_1260"/>
<dbReference type="eggNOG" id="COG0377">
    <property type="taxonomic scope" value="Bacteria"/>
</dbReference>
<dbReference type="HOGENOM" id="CLU_055737_7_0_5"/>
<dbReference type="Proteomes" id="UP000008330">
    <property type="component" value="Chromosome"/>
</dbReference>
<dbReference type="GO" id="GO:0005886">
    <property type="term" value="C:plasma membrane"/>
    <property type="evidence" value="ECO:0007669"/>
    <property type="project" value="UniProtKB-SubCell"/>
</dbReference>
<dbReference type="GO" id="GO:0045271">
    <property type="term" value="C:respiratory chain complex I"/>
    <property type="evidence" value="ECO:0007669"/>
    <property type="project" value="TreeGrafter"/>
</dbReference>
<dbReference type="GO" id="GO:0051539">
    <property type="term" value="F:4 iron, 4 sulfur cluster binding"/>
    <property type="evidence" value="ECO:0007669"/>
    <property type="project" value="UniProtKB-KW"/>
</dbReference>
<dbReference type="GO" id="GO:0005506">
    <property type="term" value="F:iron ion binding"/>
    <property type="evidence" value="ECO:0007669"/>
    <property type="project" value="UniProtKB-UniRule"/>
</dbReference>
<dbReference type="GO" id="GO:0008137">
    <property type="term" value="F:NADH dehydrogenase (ubiquinone) activity"/>
    <property type="evidence" value="ECO:0007669"/>
    <property type="project" value="InterPro"/>
</dbReference>
<dbReference type="GO" id="GO:0050136">
    <property type="term" value="F:NADH:ubiquinone reductase (non-electrogenic) activity"/>
    <property type="evidence" value="ECO:0007669"/>
    <property type="project" value="UniProtKB-UniRule"/>
</dbReference>
<dbReference type="GO" id="GO:0048038">
    <property type="term" value="F:quinone binding"/>
    <property type="evidence" value="ECO:0007669"/>
    <property type="project" value="UniProtKB-KW"/>
</dbReference>
<dbReference type="GO" id="GO:0009060">
    <property type="term" value="P:aerobic respiration"/>
    <property type="evidence" value="ECO:0007669"/>
    <property type="project" value="TreeGrafter"/>
</dbReference>
<dbReference type="GO" id="GO:0015990">
    <property type="term" value="P:electron transport coupled proton transport"/>
    <property type="evidence" value="ECO:0007669"/>
    <property type="project" value="TreeGrafter"/>
</dbReference>
<dbReference type="FunFam" id="3.40.50.12280:FF:000001">
    <property type="entry name" value="NADH-quinone oxidoreductase subunit B 2"/>
    <property type="match status" value="1"/>
</dbReference>
<dbReference type="Gene3D" id="3.40.50.12280">
    <property type="match status" value="1"/>
</dbReference>
<dbReference type="HAMAP" id="MF_01356">
    <property type="entry name" value="NDH1_NuoB"/>
    <property type="match status" value="1"/>
</dbReference>
<dbReference type="InterPro" id="IPR006137">
    <property type="entry name" value="NADH_UbQ_OxRdtase-like_20kDa"/>
</dbReference>
<dbReference type="InterPro" id="IPR006138">
    <property type="entry name" value="NADH_UQ_OxRdtase_20Kd_su"/>
</dbReference>
<dbReference type="NCBIfam" id="TIGR01957">
    <property type="entry name" value="nuoB_fam"/>
    <property type="match status" value="1"/>
</dbReference>
<dbReference type="NCBIfam" id="NF005012">
    <property type="entry name" value="PRK06411.1"/>
    <property type="match status" value="1"/>
</dbReference>
<dbReference type="PANTHER" id="PTHR11995">
    <property type="entry name" value="NADH DEHYDROGENASE"/>
    <property type="match status" value="1"/>
</dbReference>
<dbReference type="PANTHER" id="PTHR11995:SF14">
    <property type="entry name" value="NADH DEHYDROGENASE [UBIQUINONE] IRON-SULFUR PROTEIN 7, MITOCHONDRIAL"/>
    <property type="match status" value="1"/>
</dbReference>
<dbReference type="Pfam" id="PF01058">
    <property type="entry name" value="Oxidored_q6"/>
    <property type="match status" value="1"/>
</dbReference>
<dbReference type="SUPFAM" id="SSF56770">
    <property type="entry name" value="HydA/Nqo6-like"/>
    <property type="match status" value="1"/>
</dbReference>
<dbReference type="PROSITE" id="PS01150">
    <property type="entry name" value="COMPLEX1_20K"/>
    <property type="match status" value="1"/>
</dbReference>
<name>NUOB_RHILW</name>
<reference key="1">
    <citation type="journal article" date="2010" name="Stand. Genomic Sci.">
        <title>Complete genome sequence of Rhizobium leguminosarum bv trifolii strain WSM2304, an effective microsymbiont of the South American clover Trifolium polymorphum.</title>
        <authorList>
            <person name="Reeve W."/>
            <person name="O'Hara G."/>
            <person name="Chain P."/>
            <person name="Ardley J."/>
            <person name="Brau L."/>
            <person name="Nandesena K."/>
            <person name="Tiwari R."/>
            <person name="Malfatti S."/>
            <person name="Kiss H."/>
            <person name="Lapidus A."/>
            <person name="Copeland A."/>
            <person name="Nolan M."/>
            <person name="Land M."/>
            <person name="Ivanova N."/>
            <person name="Mavromatis K."/>
            <person name="Markowitz V."/>
            <person name="Kyrpides N."/>
            <person name="Melino V."/>
            <person name="Denton M."/>
            <person name="Yates R."/>
            <person name="Howieson J."/>
        </authorList>
    </citation>
    <scope>NUCLEOTIDE SEQUENCE [LARGE SCALE GENOMIC DNA]</scope>
    <source>
        <strain>WSM2304</strain>
    </source>
</reference>
<accession>B5ZYL3</accession>
<evidence type="ECO:0000255" key="1">
    <source>
        <dbReference type="HAMAP-Rule" id="MF_01356"/>
    </source>
</evidence>
<gene>
    <name evidence="1" type="primary">nuoB</name>
    <name type="ordered locus">Rleg2_1260</name>
</gene>
<protein>
    <recommendedName>
        <fullName evidence="1">NADH-quinone oxidoreductase subunit B</fullName>
        <ecNumber evidence="1">7.1.1.-</ecNumber>
    </recommendedName>
    <alternativeName>
        <fullName evidence="1">NADH dehydrogenase I subunit B</fullName>
    </alternativeName>
    <alternativeName>
        <fullName evidence="1">NDH-1 subunit B</fullName>
    </alternativeName>
</protein>
<proteinExistence type="inferred from homology"/>
<keyword id="KW-0004">4Fe-4S</keyword>
<keyword id="KW-0997">Cell inner membrane</keyword>
<keyword id="KW-1003">Cell membrane</keyword>
<keyword id="KW-0408">Iron</keyword>
<keyword id="KW-0411">Iron-sulfur</keyword>
<keyword id="KW-0472">Membrane</keyword>
<keyword id="KW-0479">Metal-binding</keyword>
<keyword id="KW-0520">NAD</keyword>
<keyword id="KW-0874">Quinone</keyword>
<keyword id="KW-1185">Reference proteome</keyword>
<keyword id="KW-1278">Translocase</keyword>
<keyword id="KW-0813">Transport</keyword>
<keyword id="KW-0830">Ubiquinone</keyword>